<accession>Q9CL00</accession>
<evidence type="ECO:0000255" key="1"/>
<evidence type="ECO:0000256" key="2">
    <source>
        <dbReference type="SAM" id="MobiDB-lite"/>
    </source>
</evidence>
<organism>
    <name type="scientific">Pasteurella multocida (strain Pm70)</name>
    <dbReference type="NCBI Taxonomy" id="272843"/>
    <lineage>
        <taxon>Bacteria</taxon>
        <taxon>Pseudomonadati</taxon>
        <taxon>Pseudomonadota</taxon>
        <taxon>Gammaproteobacteria</taxon>
        <taxon>Pasteurellales</taxon>
        <taxon>Pasteurellaceae</taxon>
        <taxon>Pasteurella</taxon>
    </lineage>
</organism>
<proteinExistence type="inferred from homology"/>
<gene>
    <name type="ordered locus">PM1449</name>
</gene>
<sequence length="180" mass="18990">MKQCIAFMAILALSLSAISEAKGGRGVRSSGYSRPVATKPAPAPKQTQTQQQSQQPDATFGQQNMQNTATNTPNNPNNRLASFATGAAAGYLLSEVLSPTEAQAQMATDQPLQPLNAQPNQSTVATFKALDQSNPAWVGMAGEQNLFCLNGALYLVNKNNHQIGAVTDNQAQAIACQVTQ</sequence>
<reference key="1">
    <citation type="journal article" date="2001" name="Proc. Natl. Acad. Sci. U.S.A.">
        <title>Complete genomic sequence of Pasteurella multocida Pm70.</title>
        <authorList>
            <person name="May B.J."/>
            <person name="Zhang Q."/>
            <person name="Li L.L."/>
            <person name="Paustian M.L."/>
            <person name="Whittam T.S."/>
            <person name="Kapur V."/>
        </authorList>
    </citation>
    <scope>NUCLEOTIDE SEQUENCE [LARGE SCALE GENOMIC DNA]</scope>
    <source>
        <strain>Pm70</strain>
    </source>
</reference>
<protein>
    <recommendedName>
        <fullName>Uncharacterized protein PM1449</fullName>
    </recommendedName>
</protein>
<keyword id="KW-1185">Reference proteome</keyword>
<keyword id="KW-0732">Signal</keyword>
<feature type="signal peptide" evidence="1">
    <location>
        <begin position="1"/>
        <end position="21"/>
    </location>
</feature>
<feature type="chain" id="PRO_0000014182" description="Uncharacterized protein PM1449">
    <location>
        <begin position="22"/>
        <end position="180"/>
    </location>
</feature>
<feature type="region of interest" description="Disordered" evidence="2">
    <location>
        <begin position="23"/>
        <end position="81"/>
    </location>
</feature>
<feature type="compositionally biased region" description="Low complexity" evidence="2">
    <location>
        <begin position="27"/>
        <end position="78"/>
    </location>
</feature>
<name>Y1449_PASMU</name>
<dbReference type="EMBL" id="AE004439">
    <property type="protein sequence ID" value="AAK03533.1"/>
    <property type="molecule type" value="Genomic_DNA"/>
</dbReference>
<dbReference type="RefSeq" id="WP_010907169.1">
    <property type="nucleotide sequence ID" value="NC_002663.1"/>
</dbReference>
<dbReference type="STRING" id="272843.PM1449"/>
<dbReference type="EnsemblBacteria" id="AAK03533">
    <property type="protein sequence ID" value="AAK03533"/>
    <property type="gene ID" value="PM1449"/>
</dbReference>
<dbReference type="KEGG" id="pmu:PM1449"/>
<dbReference type="PATRIC" id="fig|272843.6.peg.1463"/>
<dbReference type="HOGENOM" id="CLU_1458341_0_0_6"/>
<dbReference type="OrthoDB" id="5678217at2"/>
<dbReference type="Proteomes" id="UP000000809">
    <property type="component" value="Chromosome"/>
</dbReference>